<proteinExistence type="inferred from homology"/>
<comment type="function">
    <text evidence="1">Catalyzes the decarboxylative condensation of pimeloyl-[acyl-carrier protein] and L-alanine to produce 8-amino-7-oxononanoate (AON), [acyl-carrier protein], and carbon dioxide.</text>
</comment>
<comment type="catalytic activity">
    <reaction evidence="1">
        <text>6-carboxyhexanoyl-[ACP] + L-alanine + H(+) = (8S)-8-amino-7-oxononanoate + holo-[ACP] + CO2</text>
        <dbReference type="Rhea" id="RHEA:42288"/>
        <dbReference type="Rhea" id="RHEA-COMP:9685"/>
        <dbReference type="Rhea" id="RHEA-COMP:9955"/>
        <dbReference type="ChEBI" id="CHEBI:15378"/>
        <dbReference type="ChEBI" id="CHEBI:16526"/>
        <dbReference type="ChEBI" id="CHEBI:57972"/>
        <dbReference type="ChEBI" id="CHEBI:64479"/>
        <dbReference type="ChEBI" id="CHEBI:78846"/>
        <dbReference type="ChEBI" id="CHEBI:149468"/>
        <dbReference type="EC" id="2.3.1.47"/>
    </reaction>
</comment>
<comment type="cofactor">
    <cofactor evidence="1">
        <name>pyridoxal 5'-phosphate</name>
        <dbReference type="ChEBI" id="CHEBI:597326"/>
    </cofactor>
</comment>
<comment type="pathway">
    <text evidence="1">Cofactor biosynthesis; biotin biosynthesis.</text>
</comment>
<comment type="subunit">
    <text evidence="1">Homodimer.</text>
</comment>
<comment type="similarity">
    <text evidence="1">Belongs to the class-II pyridoxal-phosphate-dependent aminotransferase family. BioF subfamily.</text>
</comment>
<keyword id="KW-0093">Biotin biosynthesis</keyword>
<keyword id="KW-0663">Pyridoxal phosphate</keyword>
<keyword id="KW-0808">Transferase</keyword>
<reference key="1">
    <citation type="journal article" date="2004" name="Nat. Genet.">
        <title>Comparison of genome degradation in Paratyphi A and Typhi, human-restricted serovars of Salmonella enterica that cause typhoid.</title>
        <authorList>
            <person name="McClelland M."/>
            <person name="Sanderson K.E."/>
            <person name="Clifton S.W."/>
            <person name="Latreille P."/>
            <person name="Porwollik S."/>
            <person name="Sabo A."/>
            <person name="Meyer R."/>
            <person name="Bieri T."/>
            <person name="Ozersky P."/>
            <person name="McLellan M."/>
            <person name="Harkins C.R."/>
            <person name="Wang C."/>
            <person name="Nguyen C."/>
            <person name="Berghoff A."/>
            <person name="Elliott G."/>
            <person name="Kohlberg S."/>
            <person name="Strong C."/>
            <person name="Du F."/>
            <person name="Carter J."/>
            <person name="Kremizki C."/>
            <person name="Layman D."/>
            <person name="Leonard S."/>
            <person name="Sun H."/>
            <person name="Fulton L."/>
            <person name="Nash W."/>
            <person name="Miner T."/>
            <person name="Minx P."/>
            <person name="Delehaunty K."/>
            <person name="Fronick C."/>
            <person name="Magrini V."/>
            <person name="Nhan M."/>
            <person name="Warren W."/>
            <person name="Florea L."/>
            <person name="Spieth J."/>
            <person name="Wilson R.K."/>
        </authorList>
    </citation>
    <scope>NUCLEOTIDE SEQUENCE [LARGE SCALE GENOMIC DNA]</scope>
    <source>
        <strain>ATCC 9150 / SARB42</strain>
    </source>
</reference>
<protein>
    <recommendedName>
        <fullName evidence="1">8-amino-7-oxononanoate synthase</fullName>
        <shortName evidence="1">AONS</shortName>
        <ecNumber evidence="1">2.3.1.47</ecNumber>
    </recommendedName>
    <alternativeName>
        <fullName evidence="1">7-keto-8-amino-pelargonic acid synthase</fullName>
        <shortName evidence="1">7-KAP synthase</shortName>
        <shortName evidence="1">KAPA synthase</shortName>
    </alternativeName>
    <alternativeName>
        <fullName evidence="1">8-amino-7-ketopelargonate synthase</fullName>
    </alternativeName>
</protein>
<evidence type="ECO:0000255" key="1">
    <source>
        <dbReference type="HAMAP-Rule" id="MF_01693"/>
    </source>
</evidence>
<gene>
    <name evidence="1" type="primary">bioF</name>
    <name type="ordered locus">SPA1957</name>
</gene>
<organism>
    <name type="scientific">Salmonella paratyphi A (strain ATCC 9150 / SARB42)</name>
    <dbReference type="NCBI Taxonomy" id="295319"/>
    <lineage>
        <taxon>Bacteria</taxon>
        <taxon>Pseudomonadati</taxon>
        <taxon>Pseudomonadota</taxon>
        <taxon>Gammaproteobacteria</taxon>
        <taxon>Enterobacterales</taxon>
        <taxon>Enterobacteriaceae</taxon>
        <taxon>Salmonella</taxon>
    </lineage>
</organism>
<accession>Q5PG49</accession>
<sequence>MSWQQRVDDALTARRATDTLRRRYVVSQGAGRWLVANGRQYLNFSSNDYLGLSQHPQIIRAWQQAAIRFGVGSGGSGHISGYSVAHQALEEELAQWLGYPRALLFISGFAANQAVITALMKKNDRIVADRLSHASLLEAANLSPAQLRRFIHNDTQHLSRLLQSPCVGQQLVVTEGVYSMDGDSAPLAEIQHIARRHHAWLLVDDAHGIGVTGDEGRGTCWQRGVKPELLVVTFGKGFGVSGAAVLCSESVADYLLQFARHLVYSTSMPPAQAQALSASLAVIRSDEGRERREKLAALVQRFRAGVNASRFTLLNAHSAIQPLIVGDNSRALRLAEALRQQGCWATAIRPPTVPVGTARLRLTLTQAHEACDIDRLLEVLHGAGE</sequence>
<name>BIOF_SALPA</name>
<feature type="chain" id="PRO_0000381100" description="8-amino-7-oxononanoate synthase">
    <location>
        <begin position="1"/>
        <end position="385"/>
    </location>
</feature>
<feature type="binding site" evidence="1">
    <location>
        <position position="21"/>
    </location>
    <ligand>
        <name>substrate</name>
    </ligand>
</feature>
<feature type="binding site" evidence="1">
    <location>
        <begin position="108"/>
        <end position="109"/>
    </location>
    <ligand>
        <name>pyridoxal 5'-phosphate</name>
        <dbReference type="ChEBI" id="CHEBI:597326"/>
    </ligand>
</feature>
<feature type="binding site" evidence="1">
    <location>
        <position position="133"/>
    </location>
    <ligand>
        <name>substrate</name>
    </ligand>
</feature>
<feature type="binding site" evidence="1">
    <location>
        <position position="179"/>
    </location>
    <ligand>
        <name>pyridoxal 5'-phosphate</name>
        <dbReference type="ChEBI" id="CHEBI:597326"/>
    </ligand>
</feature>
<feature type="binding site" evidence="1">
    <location>
        <position position="207"/>
    </location>
    <ligand>
        <name>pyridoxal 5'-phosphate</name>
        <dbReference type="ChEBI" id="CHEBI:597326"/>
    </ligand>
</feature>
<feature type="binding site" evidence="1">
    <location>
        <position position="233"/>
    </location>
    <ligand>
        <name>pyridoxal 5'-phosphate</name>
        <dbReference type="ChEBI" id="CHEBI:597326"/>
    </ligand>
</feature>
<feature type="binding site" evidence="1">
    <location>
        <position position="352"/>
    </location>
    <ligand>
        <name>substrate</name>
    </ligand>
</feature>
<feature type="modified residue" description="N6-(pyridoxal phosphate)lysine" evidence="1">
    <location>
        <position position="236"/>
    </location>
</feature>
<dbReference type="EC" id="2.3.1.47" evidence="1"/>
<dbReference type="EMBL" id="CP000026">
    <property type="protein sequence ID" value="AAV77866.1"/>
    <property type="molecule type" value="Genomic_DNA"/>
</dbReference>
<dbReference type="RefSeq" id="WP_000118932.1">
    <property type="nucleotide sequence ID" value="NC_006511.1"/>
</dbReference>
<dbReference type="SMR" id="Q5PG49"/>
<dbReference type="KEGG" id="spt:SPA1957"/>
<dbReference type="HOGENOM" id="CLU_015846_11_2_6"/>
<dbReference type="UniPathway" id="UPA00078"/>
<dbReference type="Proteomes" id="UP000008185">
    <property type="component" value="Chromosome"/>
</dbReference>
<dbReference type="GO" id="GO:0008710">
    <property type="term" value="F:8-amino-7-oxononanoate synthase activity"/>
    <property type="evidence" value="ECO:0007669"/>
    <property type="project" value="UniProtKB-UniRule"/>
</dbReference>
<dbReference type="GO" id="GO:0030170">
    <property type="term" value="F:pyridoxal phosphate binding"/>
    <property type="evidence" value="ECO:0007669"/>
    <property type="project" value="UniProtKB-UniRule"/>
</dbReference>
<dbReference type="GO" id="GO:0009102">
    <property type="term" value="P:biotin biosynthetic process"/>
    <property type="evidence" value="ECO:0007669"/>
    <property type="project" value="UniProtKB-UniRule"/>
</dbReference>
<dbReference type="CDD" id="cd06454">
    <property type="entry name" value="KBL_like"/>
    <property type="match status" value="1"/>
</dbReference>
<dbReference type="FunFam" id="3.40.640.10:FF:000095">
    <property type="entry name" value="8-amino-7-oxononanoate synthase"/>
    <property type="match status" value="1"/>
</dbReference>
<dbReference type="Gene3D" id="3.90.1150.10">
    <property type="entry name" value="Aspartate Aminotransferase, domain 1"/>
    <property type="match status" value="1"/>
</dbReference>
<dbReference type="Gene3D" id="3.40.640.10">
    <property type="entry name" value="Type I PLP-dependent aspartate aminotransferase-like (Major domain)"/>
    <property type="match status" value="1"/>
</dbReference>
<dbReference type="HAMAP" id="MF_01693">
    <property type="entry name" value="BioF_aminotrans_2"/>
    <property type="match status" value="1"/>
</dbReference>
<dbReference type="InterPro" id="IPR001917">
    <property type="entry name" value="Aminotrans_II_pyridoxalP_BS"/>
</dbReference>
<dbReference type="InterPro" id="IPR004839">
    <property type="entry name" value="Aminotransferase_I/II_large"/>
</dbReference>
<dbReference type="InterPro" id="IPR050087">
    <property type="entry name" value="AON_synthase_class-II"/>
</dbReference>
<dbReference type="InterPro" id="IPR004723">
    <property type="entry name" value="AONS_Archaea/Proteobacteria"/>
</dbReference>
<dbReference type="InterPro" id="IPR022834">
    <property type="entry name" value="AONS_Proteobacteria"/>
</dbReference>
<dbReference type="InterPro" id="IPR015424">
    <property type="entry name" value="PyrdxlP-dep_Trfase"/>
</dbReference>
<dbReference type="InterPro" id="IPR015421">
    <property type="entry name" value="PyrdxlP-dep_Trfase_major"/>
</dbReference>
<dbReference type="InterPro" id="IPR015422">
    <property type="entry name" value="PyrdxlP-dep_Trfase_small"/>
</dbReference>
<dbReference type="NCBIfam" id="TIGR00858">
    <property type="entry name" value="bioF"/>
    <property type="match status" value="1"/>
</dbReference>
<dbReference type="PANTHER" id="PTHR13693:SF100">
    <property type="entry name" value="8-AMINO-7-OXONONANOATE SYNTHASE"/>
    <property type="match status" value="1"/>
</dbReference>
<dbReference type="PANTHER" id="PTHR13693">
    <property type="entry name" value="CLASS II AMINOTRANSFERASE/8-AMINO-7-OXONONANOATE SYNTHASE"/>
    <property type="match status" value="1"/>
</dbReference>
<dbReference type="Pfam" id="PF00155">
    <property type="entry name" value="Aminotran_1_2"/>
    <property type="match status" value="1"/>
</dbReference>
<dbReference type="SUPFAM" id="SSF53383">
    <property type="entry name" value="PLP-dependent transferases"/>
    <property type="match status" value="1"/>
</dbReference>
<dbReference type="PROSITE" id="PS00599">
    <property type="entry name" value="AA_TRANSFER_CLASS_2"/>
    <property type="match status" value="1"/>
</dbReference>